<organism>
    <name type="scientific">Buttiauxella sp. (strain PNBS)</name>
    <dbReference type="NCBI Taxonomy" id="129886"/>
    <lineage>
        <taxon>Bacteria</taxon>
        <taxon>Pseudomonadati</taxon>
        <taxon>Pseudomonadota</taxon>
        <taxon>Gammaproteobacteria</taxon>
        <taxon>Enterobacterales</taxon>
        <taxon>Enterobacteriaceae</taxon>
        <taxon>Buttiauxella</taxon>
    </lineage>
</organism>
<protein>
    <recommendedName>
        <fullName evidence="1">Alkanesulfonate monooxygenase</fullName>
        <ecNumber evidence="1">1.14.14.5</ecNumber>
    </recommendedName>
    <alternativeName>
        <fullName evidence="1">FMNH2-dependent aliphatic sulfonate monooxygenase</fullName>
    </alternativeName>
</protein>
<comment type="function">
    <text evidence="1">Catalyzes the desulfonation of aliphatic sulfonates.</text>
</comment>
<comment type="catalytic activity">
    <reaction evidence="1">
        <text>an alkanesulfonate + FMNH2 + O2 = an aldehyde + FMN + sulfite + H2O + 2 H(+)</text>
        <dbReference type="Rhea" id="RHEA:23064"/>
        <dbReference type="ChEBI" id="CHEBI:15377"/>
        <dbReference type="ChEBI" id="CHEBI:15378"/>
        <dbReference type="ChEBI" id="CHEBI:15379"/>
        <dbReference type="ChEBI" id="CHEBI:17359"/>
        <dbReference type="ChEBI" id="CHEBI:17478"/>
        <dbReference type="ChEBI" id="CHEBI:57618"/>
        <dbReference type="ChEBI" id="CHEBI:58210"/>
        <dbReference type="ChEBI" id="CHEBI:134249"/>
        <dbReference type="EC" id="1.14.14.5"/>
    </reaction>
</comment>
<comment type="subunit">
    <text evidence="1">Homotetramer.</text>
</comment>
<comment type="miscellaneous">
    <text evidence="1">FMNH(2) which is absolutely required for this enzymatic reaction, is provided by SsuE.</text>
</comment>
<comment type="similarity">
    <text evidence="1">Belongs to the SsuD family.</text>
</comment>
<name>SSUD_BUTSP</name>
<dbReference type="EC" id="1.14.14.5" evidence="1"/>
<dbReference type="EMBL" id="AF250869">
    <property type="protein sequence ID" value="AAF81710.1"/>
    <property type="molecule type" value="Genomic_DNA"/>
</dbReference>
<dbReference type="SMR" id="Q9KHR3"/>
<dbReference type="GO" id="GO:0008726">
    <property type="term" value="F:alkanesulfonate monooxygenase activity"/>
    <property type="evidence" value="ECO:0007669"/>
    <property type="project" value="UniProtKB-UniRule"/>
</dbReference>
<dbReference type="GO" id="GO:0046306">
    <property type="term" value="P:alkanesulfonate catabolic process"/>
    <property type="evidence" value="ECO:0007669"/>
    <property type="project" value="TreeGrafter"/>
</dbReference>
<dbReference type="CDD" id="cd01094">
    <property type="entry name" value="Alkanesulfonate_monoxygenase"/>
    <property type="match status" value="1"/>
</dbReference>
<dbReference type="FunFam" id="3.20.20.30:FF:000001">
    <property type="entry name" value="Alkanesulfonate monooxygenase"/>
    <property type="match status" value="1"/>
</dbReference>
<dbReference type="Gene3D" id="3.20.20.30">
    <property type="entry name" value="Luciferase-like domain"/>
    <property type="match status" value="1"/>
</dbReference>
<dbReference type="HAMAP" id="MF_01229">
    <property type="entry name" value="Alkanesulf_monooxygen"/>
    <property type="match status" value="1"/>
</dbReference>
<dbReference type="InterPro" id="IPR019911">
    <property type="entry name" value="Alkanesulphonate_mOase_FMN-dep"/>
</dbReference>
<dbReference type="InterPro" id="IPR011251">
    <property type="entry name" value="Luciferase-like_dom"/>
</dbReference>
<dbReference type="InterPro" id="IPR036661">
    <property type="entry name" value="Luciferase-like_sf"/>
</dbReference>
<dbReference type="InterPro" id="IPR050172">
    <property type="entry name" value="SsuD_RutA_monooxygenase"/>
</dbReference>
<dbReference type="NCBIfam" id="TIGR03565">
    <property type="entry name" value="alk_sulf_monoox"/>
    <property type="match status" value="1"/>
</dbReference>
<dbReference type="NCBIfam" id="NF001939">
    <property type="entry name" value="PRK00719.1"/>
    <property type="match status" value="1"/>
</dbReference>
<dbReference type="PANTHER" id="PTHR42847">
    <property type="entry name" value="ALKANESULFONATE MONOOXYGENASE"/>
    <property type="match status" value="1"/>
</dbReference>
<dbReference type="PANTHER" id="PTHR42847:SF4">
    <property type="entry name" value="ALKANESULFONATE MONOOXYGENASE-RELATED"/>
    <property type="match status" value="1"/>
</dbReference>
<dbReference type="Pfam" id="PF00296">
    <property type="entry name" value="Bac_luciferase"/>
    <property type="match status" value="1"/>
</dbReference>
<dbReference type="SUPFAM" id="SSF51679">
    <property type="entry name" value="Bacterial luciferase-like"/>
    <property type="match status" value="1"/>
</dbReference>
<proteinExistence type="inferred from homology"/>
<keyword id="KW-0285">Flavoprotein</keyword>
<keyword id="KW-0288">FMN</keyword>
<keyword id="KW-0503">Monooxygenase</keyword>
<keyword id="KW-0560">Oxidoreductase</keyword>
<reference key="1">
    <citation type="submission" date="2000-03" db="EMBL/GenBank/DDBJ databases">
        <title>Sulfur-controlled aryl desulfonation phenotypes in Pseudomonas spp. and other soil isolates, and conservation of the sulfonate monooxygenase gene (ssuD).</title>
        <authorList>
            <person name="Kertesz M.A."/>
            <person name="Sialm M."/>
        </authorList>
    </citation>
    <scope>NUCLEOTIDE SEQUENCE [GENOMIC DNA]</scope>
</reference>
<sequence length="382" mass="41587">MSLNIFWFLPTHGDGKYLGTSDGARAVDHGYLQQIAQAADRLGFGGVLIPTGRSCEDSWLVAASLIPVTQHLKFLVALRPGIISPTVAARQAATLDRLSNGRALFNLVTGGDPDELAGDGLHLNHQERYEASVEFTRIWRKVLEGENVDYDGKHIQVKGAKLLYPPIQQPRPPLYFGGSSEAAQDLAAEQVELYLTWGEPPAAVAEKIAQVREKAAAQGREVRFGIRLHVIVRETNEEAWAAADRLISHLDDETIARAQASLARFDSVGQQRMAALHGGNRDNLEVSPNLWAGVGLVRGGAGTALVGDGPTVAARVKEYADLGIDTFIFSGYPHLEESYRVAELLFPHLDVQRPEQPKTRGYVSPFGEMVANDILPKSVSQS</sequence>
<feature type="chain" id="PRO_0000216705" description="Alkanesulfonate monooxygenase">
    <location>
        <begin position="1"/>
        <end position="382"/>
    </location>
</feature>
<accession>Q9KHR3</accession>
<evidence type="ECO:0000255" key="1">
    <source>
        <dbReference type="HAMAP-Rule" id="MF_01229"/>
    </source>
</evidence>
<gene>
    <name evidence="1" type="primary">ssuD</name>
</gene>